<reference key="1">
    <citation type="journal article" date="2008" name="PLoS Genet.">
        <title>Genomic islands in the pathogenic filamentous fungus Aspergillus fumigatus.</title>
        <authorList>
            <person name="Fedorova N.D."/>
            <person name="Khaldi N."/>
            <person name="Joardar V.S."/>
            <person name="Maiti R."/>
            <person name="Amedeo P."/>
            <person name="Anderson M.J."/>
            <person name="Crabtree J."/>
            <person name="Silva J.C."/>
            <person name="Badger J.H."/>
            <person name="Albarraq A."/>
            <person name="Angiuoli S."/>
            <person name="Bussey H."/>
            <person name="Bowyer P."/>
            <person name="Cotty P.J."/>
            <person name="Dyer P.S."/>
            <person name="Egan A."/>
            <person name="Galens K."/>
            <person name="Fraser-Liggett C.M."/>
            <person name="Haas B.J."/>
            <person name="Inman J.M."/>
            <person name="Kent R."/>
            <person name="Lemieux S."/>
            <person name="Malavazi I."/>
            <person name="Orvis J."/>
            <person name="Roemer T."/>
            <person name="Ronning C.M."/>
            <person name="Sundaram J.P."/>
            <person name="Sutton G."/>
            <person name="Turner G."/>
            <person name="Venter J.C."/>
            <person name="White O.R."/>
            <person name="Whitty B.R."/>
            <person name="Youngman P."/>
            <person name="Wolfe K.H."/>
            <person name="Goldman G.H."/>
            <person name="Wortman J.R."/>
            <person name="Jiang B."/>
            <person name="Denning D.W."/>
            <person name="Nierman W.C."/>
        </authorList>
    </citation>
    <scope>NUCLEOTIDE SEQUENCE [LARGE SCALE GENOMIC DNA]</scope>
    <source>
        <strain>ATCC 1007 / CBS 513.65 / DSM 816 / NCTC 3887 / NRRL 1 / QM 1276 / 107</strain>
    </source>
</reference>
<keyword id="KW-0021">Allosteric enzyme</keyword>
<keyword id="KW-0028">Amino-acid biosynthesis</keyword>
<keyword id="KW-0067">ATP-binding</keyword>
<keyword id="KW-0198">Cysteine biosynthesis</keyword>
<keyword id="KW-0963">Cytoplasm</keyword>
<keyword id="KW-0486">Methionine biosynthesis</keyword>
<keyword id="KW-0547">Nucleotide-binding</keyword>
<keyword id="KW-0548">Nucleotidyltransferase</keyword>
<keyword id="KW-1185">Reference proteome</keyword>
<keyword id="KW-0808">Transferase</keyword>
<gene>
    <name evidence="1" type="primary">met3</name>
    <name type="ORF">ACLA_034480</name>
</gene>
<accession>A1CJC1</accession>
<comment type="function">
    <text evidence="1">Catalyzes the first intracellular reaction of sulfate assimilation, forming adenosine-5'-phosphosulfate (APS) from inorganic sulfate and ATP. Plays an important role in sulfate activation as a component of the biosynthesis pathway of sulfur-containing amino acids.</text>
</comment>
<comment type="catalytic activity">
    <reaction evidence="1">
        <text>sulfate + ATP + H(+) = adenosine 5'-phosphosulfate + diphosphate</text>
        <dbReference type="Rhea" id="RHEA:18133"/>
        <dbReference type="ChEBI" id="CHEBI:15378"/>
        <dbReference type="ChEBI" id="CHEBI:16189"/>
        <dbReference type="ChEBI" id="CHEBI:30616"/>
        <dbReference type="ChEBI" id="CHEBI:33019"/>
        <dbReference type="ChEBI" id="CHEBI:58243"/>
        <dbReference type="EC" id="2.7.7.4"/>
    </reaction>
</comment>
<comment type="activity regulation">
    <text evidence="1">Allosterically inhibited by 3'-phosphoadenosine 5'-phosphosulfate (PAPS).</text>
</comment>
<comment type="pathway">
    <text evidence="1">Sulfur metabolism; hydrogen sulfide biosynthesis; sulfite from sulfate: step 1/3.</text>
</comment>
<comment type="subunit">
    <text evidence="1">Homohexamer. Dimer of trimers.</text>
</comment>
<comment type="subcellular location">
    <subcellularLocation>
        <location evidence="1">Cytoplasm</location>
    </subcellularLocation>
</comment>
<comment type="domain">
    <text evidence="1">The adenylyl-sulfate kinase (APS kinase) is non-functional. It is involved in allosteric regulation by PAPS. PAPS binding induces a large rotational rearrangement of domains lowering the substrate affinity of the enzyme.</text>
</comment>
<comment type="similarity">
    <text evidence="1">In the N-terminal section; belongs to the sulfate adenylyltransferase family.</text>
</comment>
<comment type="similarity">
    <text evidence="1">In the C-terminal section; belongs to the APS kinase family.</text>
</comment>
<organism>
    <name type="scientific">Aspergillus clavatus (strain ATCC 1007 / CBS 513.65 / DSM 816 / NCTC 3887 / NRRL 1 / QM 1276 / 107)</name>
    <dbReference type="NCBI Taxonomy" id="344612"/>
    <lineage>
        <taxon>Eukaryota</taxon>
        <taxon>Fungi</taxon>
        <taxon>Dikarya</taxon>
        <taxon>Ascomycota</taxon>
        <taxon>Pezizomycotina</taxon>
        <taxon>Eurotiomycetes</taxon>
        <taxon>Eurotiomycetidae</taxon>
        <taxon>Eurotiales</taxon>
        <taxon>Aspergillaceae</taxon>
        <taxon>Aspergillus</taxon>
        <taxon>Aspergillus subgen. Fumigati</taxon>
    </lineage>
</organism>
<feature type="chain" id="PRO_0000283676" description="Sulfate adenylyltransferase">
    <location>
        <begin position="1"/>
        <end position="574"/>
    </location>
</feature>
<feature type="region of interest" description="N-terminal" evidence="1">
    <location>
        <begin position="1"/>
        <end position="169"/>
    </location>
</feature>
<feature type="region of interest" description="Catalytic" evidence="1">
    <location>
        <begin position="170"/>
        <end position="394"/>
    </location>
</feature>
<feature type="region of interest" description="Allosteric regulation domain; adenylyl-sulfate kinase-like" evidence="1">
    <location>
        <begin position="395"/>
        <end position="574"/>
    </location>
</feature>
<feature type="active site" evidence="1">
    <location>
        <position position="198"/>
    </location>
</feature>
<feature type="active site" evidence="1">
    <location>
        <position position="199"/>
    </location>
</feature>
<feature type="active site" evidence="1">
    <location>
        <position position="200"/>
    </location>
</feature>
<feature type="binding site" evidence="1">
    <location>
        <begin position="197"/>
        <end position="200"/>
    </location>
    <ligand>
        <name>ATP</name>
        <dbReference type="ChEBI" id="CHEBI:30616"/>
    </ligand>
</feature>
<feature type="binding site" evidence="1">
    <location>
        <position position="197"/>
    </location>
    <ligand>
        <name>sulfate</name>
        <dbReference type="ChEBI" id="CHEBI:16189"/>
    </ligand>
</feature>
<feature type="binding site" evidence="1">
    <location>
        <position position="199"/>
    </location>
    <ligand>
        <name>sulfate</name>
        <dbReference type="ChEBI" id="CHEBI:16189"/>
    </ligand>
</feature>
<feature type="binding site" evidence="1">
    <location>
        <begin position="291"/>
        <end position="294"/>
    </location>
    <ligand>
        <name>ATP</name>
        <dbReference type="ChEBI" id="CHEBI:30616"/>
    </ligand>
</feature>
<feature type="binding site" evidence="1">
    <location>
        <position position="295"/>
    </location>
    <ligand>
        <name>sulfate</name>
        <dbReference type="ChEBI" id="CHEBI:16189"/>
    </ligand>
</feature>
<feature type="binding site" evidence="1">
    <location>
        <position position="333"/>
    </location>
    <ligand>
        <name>ATP</name>
        <dbReference type="ChEBI" id="CHEBI:30616"/>
    </ligand>
</feature>
<feature type="binding site" evidence="1">
    <location>
        <begin position="434"/>
        <end position="437"/>
    </location>
    <ligand>
        <name>3'-phosphoadenylyl sulfate</name>
        <dbReference type="ChEBI" id="CHEBI:58339"/>
        <note>allosteric inhibitor</note>
    </ligand>
</feature>
<feature type="binding site" evidence="1">
    <location>
        <position position="451"/>
    </location>
    <ligand>
        <name>3'-phosphoadenylyl sulfate</name>
        <dbReference type="ChEBI" id="CHEBI:58339"/>
        <note>allosteric inhibitor</note>
    </ligand>
</feature>
<feature type="binding site" evidence="1">
    <location>
        <begin position="477"/>
        <end position="478"/>
    </location>
    <ligand>
        <name>3'-phosphoadenylyl sulfate</name>
        <dbReference type="ChEBI" id="CHEBI:58339"/>
        <note>allosteric inhibitor</note>
    </ligand>
</feature>
<feature type="binding site" evidence="1">
    <location>
        <position position="516"/>
    </location>
    <ligand>
        <name>3'-phosphoadenylyl sulfate</name>
        <dbReference type="ChEBI" id="CHEBI:58339"/>
        <note>allosteric inhibitor</note>
    </ligand>
</feature>
<feature type="site" description="Transition state stabilizer" evidence="1">
    <location>
        <position position="203"/>
    </location>
</feature>
<feature type="site" description="Transition state stabilizer" evidence="1">
    <location>
        <position position="206"/>
    </location>
</feature>
<feature type="site" description="Induces change in substrate recognition on ATP binding" evidence="1">
    <location>
        <position position="330"/>
    </location>
</feature>
<dbReference type="EC" id="2.7.7.4" evidence="1"/>
<dbReference type="EMBL" id="DS027056">
    <property type="protein sequence ID" value="EAW09245.1"/>
    <property type="molecule type" value="Genomic_DNA"/>
</dbReference>
<dbReference type="RefSeq" id="XP_001270671.1">
    <property type="nucleotide sequence ID" value="XM_001270670.1"/>
</dbReference>
<dbReference type="SMR" id="A1CJC1"/>
<dbReference type="STRING" id="344612.A1CJC1"/>
<dbReference type="EnsemblFungi" id="EAW09245">
    <property type="protein sequence ID" value="EAW09245"/>
    <property type="gene ID" value="ACLA_034480"/>
</dbReference>
<dbReference type="GeneID" id="4702828"/>
<dbReference type="KEGG" id="act:ACLA_034480"/>
<dbReference type="VEuPathDB" id="FungiDB:ACLA_034480"/>
<dbReference type="eggNOG" id="KOG0636">
    <property type="taxonomic scope" value="Eukaryota"/>
</dbReference>
<dbReference type="HOGENOM" id="CLU_022950_0_0_1"/>
<dbReference type="OMA" id="MEMRYAG"/>
<dbReference type="OrthoDB" id="468at2759"/>
<dbReference type="UniPathway" id="UPA00140">
    <property type="reaction ID" value="UER00204"/>
</dbReference>
<dbReference type="Proteomes" id="UP000006701">
    <property type="component" value="Unassembled WGS sequence"/>
</dbReference>
<dbReference type="GO" id="GO:0005737">
    <property type="term" value="C:cytoplasm"/>
    <property type="evidence" value="ECO:0007669"/>
    <property type="project" value="UniProtKB-SubCell"/>
</dbReference>
<dbReference type="GO" id="GO:0004020">
    <property type="term" value="F:adenylylsulfate kinase activity"/>
    <property type="evidence" value="ECO:0007669"/>
    <property type="project" value="InterPro"/>
</dbReference>
<dbReference type="GO" id="GO:0005524">
    <property type="term" value="F:ATP binding"/>
    <property type="evidence" value="ECO:0007669"/>
    <property type="project" value="UniProtKB-KW"/>
</dbReference>
<dbReference type="GO" id="GO:0004781">
    <property type="term" value="F:sulfate adenylyltransferase (ATP) activity"/>
    <property type="evidence" value="ECO:0007669"/>
    <property type="project" value="UniProtKB-UniRule"/>
</dbReference>
<dbReference type="GO" id="GO:0019344">
    <property type="term" value="P:cysteine biosynthetic process"/>
    <property type="evidence" value="ECO:0007669"/>
    <property type="project" value="UniProtKB-KW"/>
</dbReference>
<dbReference type="GO" id="GO:0070814">
    <property type="term" value="P:hydrogen sulfide biosynthetic process"/>
    <property type="evidence" value="ECO:0007669"/>
    <property type="project" value="UniProtKB-UniRule"/>
</dbReference>
<dbReference type="GO" id="GO:0009086">
    <property type="term" value="P:methionine biosynthetic process"/>
    <property type="evidence" value="ECO:0007669"/>
    <property type="project" value="UniProtKB-KW"/>
</dbReference>
<dbReference type="GO" id="GO:0010134">
    <property type="term" value="P:sulfate assimilation via adenylyl sulfate reduction"/>
    <property type="evidence" value="ECO:0007669"/>
    <property type="project" value="TreeGrafter"/>
</dbReference>
<dbReference type="GO" id="GO:0019379">
    <property type="term" value="P:sulfate assimilation, phosphoadenylyl sulfate reduction by phosphoadenylyl-sulfate reductase (thioredoxin)"/>
    <property type="evidence" value="ECO:0007669"/>
    <property type="project" value="TreeGrafter"/>
</dbReference>
<dbReference type="CDD" id="cd02027">
    <property type="entry name" value="APSK"/>
    <property type="match status" value="1"/>
</dbReference>
<dbReference type="CDD" id="cd00517">
    <property type="entry name" value="ATPS"/>
    <property type="match status" value="1"/>
</dbReference>
<dbReference type="FunFam" id="3.10.400.10:FF:000003">
    <property type="entry name" value="Sulfate adenylyltransferase"/>
    <property type="match status" value="1"/>
</dbReference>
<dbReference type="FunFam" id="3.40.50.300:FF:000802">
    <property type="entry name" value="Sulfate adenylyltransferase"/>
    <property type="match status" value="1"/>
</dbReference>
<dbReference type="FunFam" id="3.40.50.620:FF:000052">
    <property type="entry name" value="Sulfate adenylyltransferase"/>
    <property type="match status" value="1"/>
</dbReference>
<dbReference type="Gene3D" id="3.40.50.620">
    <property type="entry name" value="HUPs"/>
    <property type="match status" value="1"/>
</dbReference>
<dbReference type="Gene3D" id="3.40.50.300">
    <property type="entry name" value="P-loop containing nucleotide triphosphate hydrolases"/>
    <property type="match status" value="1"/>
</dbReference>
<dbReference type="Gene3D" id="3.10.400.10">
    <property type="entry name" value="Sulfate adenylyltransferase"/>
    <property type="match status" value="1"/>
</dbReference>
<dbReference type="HAMAP" id="MF_03106">
    <property type="entry name" value="Sulf_adenylyltr_euk"/>
    <property type="match status" value="1"/>
</dbReference>
<dbReference type="InterPro" id="IPR002891">
    <property type="entry name" value="APS_kinase"/>
</dbReference>
<dbReference type="InterPro" id="IPR025980">
    <property type="entry name" value="ATP-Sase_PUA-like_dom"/>
</dbReference>
<dbReference type="InterPro" id="IPR027417">
    <property type="entry name" value="P-loop_NTPase"/>
</dbReference>
<dbReference type="InterPro" id="IPR015947">
    <property type="entry name" value="PUA-like_sf"/>
</dbReference>
<dbReference type="InterPro" id="IPR014729">
    <property type="entry name" value="Rossmann-like_a/b/a_fold"/>
</dbReference>
<dbReference type="InterPro" id="IPR027535">
    <property type="entry name" value="Sulf_adenylyltr_euk"/>
</dbReference>
<dbReference type="InterPro" id="IPR050512">
    <property type="entry name" value="Sulf_AdTrans/APS_kinase"/>
</dbReference>
<dbReference type="InterPro" id="IPR024951">
    <property type="entry name" value="Sulfurylase_cat_dom"/>
</dbReference>
<dbReference type="InterPro" id="IPR002650">
    <property type="entry name" value="Sulphate_adenylyltransferase"/>
</dbReference>
<dbReference type="NCBIfam" id="TIGR00455">
    <property type="entry name" value="apsK"/>
    <property type="match status" value="1"/>
</dbReference>
<dbReference type="NCBIfam" id="NF004040">
    <property type="entry name" value="PRK05537.1"/>
    <property type="match status" value="1"/>
</dbReference>
<dbReference type="NCBIfam" id="TIGR00339">
    <property type="entry name" value="sopT"/>
    <property type="match status" value="1"/>
</dbReference>
<dbReference type="PANTHER" id="PTHR42700">
    <property type="entry name" value="SULFATE ADENYLYLTRANSFERASE"/>
    <property type="match status" value="1"/>
</dbReference>
<dbReference type="PANTHER" id="PTHR42700:SF1">
    <property type="entry name" value="SULFATE ADENYLYLTRANSFERASE"/>
    <property type="match status" value="1"/>
</dbReference>
<dbReference type="Pfam" id="PF01583">
    <property type="entry name" value="APS_kinase"/>
    <property type="match status" value="1"/>
</dbReference>
<dbReference type="Pfam" id="PF01747">
    <property type="entry name" value="ATP-sulfurylase"/>
    <property type="match status" value="1"/>
</dbReference>
<dbReference type="Pfam" id="PF14306">
    <property type="entry name" value="PUA_2"/>
    <property type="match status" value="1"/>
</dbReference>
<dbReference type="SUPFAM" id="SSF52374">
    <property type="entry name" value="Nucleotidylyl transferase"/>
    <property type="match status" value="1"/>
</dbReference>
<dbReference type="SUPFAM" id="SSF52540">
    <property type="entry name" value="P-loop containing nucleoside triphosphate hydrolases"/>
    <property type="match status" value="1"/>
</dbReference>
<dbReference type="SUPFAM" id="SSF88697">
    <property type="entry name" value="PUA domain-like"/>
    <property type="match status" value="1"/>
</dbReference>
<name>MET3_ASPCL</name>
<sequence length="574" mass="64189">MSNPPHGGVLKDLLARDAPRHDQLETEAEQLPAIVLTERQLCDLELIMNGGFSPLEGFMNQKDYDNVCENVRLADGNLFSMPITLDVSKAVIDESQLKAGSRVTLRDFRDDRNLAILTIDDIYRPDKAREAKLVFGGDKEHPAIKFLNNTVQEFYIGGKVEAINKLNHYDYVALRYTPAELRVHFDKLGWSRVVAFQTRNPMHRAHRELTVRAARARQANVLIHPVVGLTKPGDIDHFTRVRAYQALLPRYPNGMAVLGLLGLAMRMGGPREAIWHAIIRKNHGATHFIVGRDHAGPGKNSKGEEFYGPYDAQHAVEKYREELGIEVVEFQQVTYLPDTDEYKPKDEVPAGVKTLDISGTELRNRLRTGAPIPEWFSYPEVVKILRESSRPRSTQGFTIFLTGYMNSGKDAIARALQVTLNQQGGRSVSLLLGDTVRHELSSELGFSREDRHTNVQRIAFVAGELTRAGAAVIAAPIAPYEESRNAARDAVTQGGGNFFLVHVATPLEYCEKTDKRGIYAKARRGEIKGFTGVDDPYETPSNAHLTVDVSKQTVRSIVHEIILMLETEGFFDRA</sequence>
<evidence type="ECO:0000255" key="1">
    <source>
        <dbReference type="HAMAP-Rule" id="MF_03106"/>
    </source>
</evidence>
<protein>
    <recommendedName>
        <fullName evidence="1">Sulfate adenylyltransferase</fullName>
        <ecNumber evidence="1">2.7.7.4</ecNumber>
    </recommendedName>
    <alternativeName>
        <fullName evidence="1">ATP-sulfurylase</fullName>
    </alternativeName>
    <alternativeName>
        <fullName evidence="1">Sulfate adenylate transferase</fullName>
        <shortName evidence="1">SAT</shortName>
    </alternativeName>
</protein>
<proteinExistence type="inferred from homology"/>